<gene>
    <name evidence="1" type="primary">ilvC</name>
    <name type="ordered locus">SRU_2147</name>
</gene>
<evidence type="ECO:0000255" key="1">
    <source>
        <dbReference type="HAMAP-Rule" id="MF_00435"/>
    </source>
</evidence>
<evidence type="ECO:0000255" key="2">
    <source>
        <dbReference type="PROSITE-ProRule" id="PRU01197"/>
    </source>
</evidence>
<evidence type="ECO:0000255" key="3">
    <source>
        <dbReference type="PROSITE-ProRule" id="PRU01198"/>
    </source>
</evidence>
<evidence type="ECO:0000256" key="4">
    <source>
        <dbReference type="SAM" id="MobiDB-lite"/>
    </source>
</evidence>
<comment type="function">
    <text evidence="1">Involved in the biosynthesis of branched-chain amino acids (BCAA). Catalyzes an alkyl-migration followed by a ketol-acid reduction of (S)-2-acetolactate (S2AL) to yield (R)-2,3-dihydroxy-isovalerate. In the isomerase reaction, S2AL is rearranged via a Mg-dependent methyl migration to produce 3-hydroxy-3-methyl-2-ketobutyrate (HMKB). In the reductase reaction, this 2-ketoacid undergoes a metal-dependent reduction by NADPH to yield (R)-2,3-dihydroxy-isovalerate.</text>
</comment>
<comment type="catalytic activity">
    <reaction evidence="1">
        <text>(2R)-2,3-dihydroxy-3-methylbutanoate + NADP(+) = (2S)-2-acetolactate + NADPH + H(+)</text>
        <dbReference type="Rhea" id="RHEA:22068"/>
        <dbReference type="ChEBI" id="CHEBI:15378"/>
        <dbReference type="ChEBI" id="CHEBI:49072"/>
        <dbReference type="ChEBI" id="CHEBI:57783"/>
        <dbReference type="ChEBI" id="CHEBI:58349"/>
        <dbReference type="ChEBI" id="CHEBI:58476"/>
        <dbReference type="EC" id="1.1.1.86"/>
    </reaction>
</comment>
<comment type="catalytic activity">
    <reaction evidence="1">
        <text>(2R,3R)-2,3-dihydroxy-3-methylpentanoate + NADP(+) = (S)-2-ethyl-2-hydroxy-3-oxobutanoate + NADPH + H(+)</text>
        <dbReference type="Rhea" id="RHEA:13493"/>
        <dbReference type="ChEBI" id="CHEBI:15378"/>
        <dbReference type="ChEBI" id="CHEBI:49256"/>
        <dbReference type="ChEBI" id="CHEBI:49258"/>
        <dbReference type="ChEBI" id="CHEBI:57783"/>
        <dbReference type="ChEBI" id="CHEBI:58349"/>
        <dbReference type="EC" id="1.1.1.86"/>
    </reaction>
</comment>
<comment type="cofactor">
    <cofactor evidence="1">
        <name>Mg(2+)</name>
        <dbReference type="ChEBI" id="CHEBI:18420"/>
    </cofactor>
    <text evidence="1">Binds 2 magnesium ions per subunit.</text>
</comment>
<comment type="pathway">
    <text evidence="1">Amino-acid biosynthesis; L-isoleucine biosynthesis; L-isoleucine from 2-oxobutanoate: step 2/4.</text>
</comment>
<comment type="pathway">
    <text evidence="1">Amino-acid biosynthesis; L-valine biosynthesis; L-valine from pyruvate: step 2/4.</text>
</comment>
<comment type="similarity">
    <text evidence="1">Belongs to the ketol-acid reductoisomerase family.</text>
</comment>
<name>ILVC_SALRD</name>
<keyword id="KW-0028">Amino-acid biosynthesis</keyword>
<keyword id="KW-0100">Branched-chain amino acid biosynthesis</keyword>
<keyword id="KW-0460">Magnesium</keyword>
<keyword id="KW-0479">Metal-binding</keyword>
<keyword id="KW-0521">NADP</keyword>
<keyword id="KW-0560">Oxidoreductase</keyword>
<keyword id="KW-1185">Reference proteome</keyword>
<dbReference type="EC" id="1.1.1.86" evidence="1"/>
<dbReference type="EMBL" id="CP000159">
    <property type="protein sequence ID" value="ABC44505.1"/>
    <property type="molecule type" value="Genomic_DNA"/>
</dbReference>
<dbReference type="RefSeq" id="WP_011404873.1">
    <property type="nucleotide sequence ID" value="NC_007677.1"/>
</dbReference>
<dbReference type="RefSeq" id="YP_446252.1">
    <property type="nucleotide sequence ID" value="NC_007677.1"/>
</dbReference>
<dbReference type="SMR" id="Q2S0M9"/>
<dbReference type="STRING" id="309807.SRU_2147"/>
<dbReference type="EnsemblBacteria" id="ABC44505">
    <property type="protein sequence ID" value="ABC44505"/>
    <property type="gene ID" value="SRU_2147"/>
</dbReference>
<dbReference type="KEGG" id="sru:SRU_2147"/>
<dbReference type="PATRIC" id="fig|309807.25.peg.2232"/>
<dbReference type="eggNOG" id="COG0059">
    <property type="taxonomic scope" value="Bacteria"/>
</dbReference>
<dbReference type="HOGENOM" id="CLU_033821_0_1_10"/>
<dbReference type="OrthoDB" id="9804088at2"/>
<dbReference type="UniPathway" id="UPA00047">
    <property type="reaction ID" value="UER00056"/>
</dbReference>
<dbReference type="UniPathway" id="UPA00049">
    <property type="reaction ID" value="UER00060"/>
</dbReference>
<dbReference type="Proteomes" id="UP000008674">
    <property type="component" value="Chromosome"/>
</dbReference>
<dbReference type="GO" id="GO:0005829">
    <property type="term" value="C:cytosol"/>
    <property type="evidence" value="ECO:0007669"/>
    <property type="project" value="TreeGrafter"/>
</dbReference>
<dbReference type="GO" id="GO:0004455">
    <property type="term" value="F:ketol-acid reductoisomerase activity"/>
    <property type="evidence" value="ECO:0007669"/>
    <property type="project" value="UniProtKB-UniRule"/>
</dbReference>
<dbReference type="GO" id="GO:0000287">
    <property type="term" value="F:magnesium ion binding"/>
    <property type="evidence" value="ECO:0007669"/>
    <property type="project" value="UniProtKB-UniRule"/>
</dbReference>
<dbReference type="GO" id="GO:0050661">
    <property type="term" value="F:NADP binding"/>
    <property type="evidence" value="ECO:0007669"/>
    <property type="project" value="InterPro"/>
</dbReference>
<dbReference type="GO" id="GO:0009097">
    <property type="term" value="P:isoleucine biosynthetic process"/>
    <property type="evidence" value="ECO:0007669"/>
    <property type="project" value="UniProtKB-UniRule"/>
</dbReference>
<dbReference type="GO" id="GO:0009099">
    <property type="term" value="P:L-valine biosynthetic process"/>
    <property type="evidence" value="ECO:0007669"/>
    <property type="project" value="UniProtKB-UniRule"/>
</dbReference>
<dbReference type="FunFam" id="3.40.50.720:FF:000023">
    <property type="entry name" value="Ketol-acid reductoisomerase (NADP(+))"/>
    <property type="match status" value="1"/>
</dbReference>
<dbReference type="Gene3D" id="6.10.240.10">
    <property type="match status" value="1"/>
</dbReference>
<dbReference type="Gene3D" id="3.40.50.720">
    <property type="entry name" value="NAD(P)-binding Rossmann-like Domain"/>
    <property type="match status" value="1"/>
</dbReference>
<dbReference type="HAMAP" id="MF_00435">
    <property type="entry name" value="IlvC"/>
    <property type="match status" value="1"/>
</dbReference>
<dbReference type="InterPro" id="IPR008927">
    <property type="entry name" value="6-PGluconate_DH-like_C_sf"/>
</dbReference>
<dbReference type="InterPro" id="IPR013023">
    <property type="entry name" value="KARI"/>
</dbReference>
<dbReference type="InterPro" id="IPR000506">
    <property type="entry name" value="KARI_C"/>
</dbReference>
<dbReference type="InterPro" id="IPR013116">
    <property type="entry name" value="KARI_N"/>
</dbReference>
<dbReference type="InterPro" id="IPR014359">
    <property type="entry name" value="KARI_prok"/>
</dbReference>
<dbReference type="InterPro" id="IPR036291">
    <property type="entry name" value="NAD(P)-bd_dom_sf"/>
</dbReference>
<dbReference type="NCBIfam" id="TIGR00465">
    <property type="entry name" value="ilvC"/>
    <property type="match status" value="1"/>
</dbReference>
<dbReference type="NCBIfam" id="NF004017">
    <property type="entry name" value="PRK05479.1"/>
    <property type="match status" value="1"/>
</dbReference>
<dbReference type="NCBIfam" id="NF009940">
    <property type="entry name" value="PRK13403.1"/>
    <property type="match status" value="1"/>
</dbReference>
<dbReference type="PANTHER" id="PTHR21371">
    <property type="entry name" value="KETOL-ACID REDUCTOISOMERASE, MITOCHONDRIAL"/>
    <property type="match status" value="1"/>
</dbReference>
<dbReference type="PANTHER" id="PTHR21371:SF1">
    <property type="entry name" value="KETOL-ACID REDUCTOISOMERASE, MITOCHONDRIAL"/>
    <property type="match status" value="1"/>
</dbReference>
<dbReference type="Pfam" id="PF01450">
    <property type="entry name" value="KARI_C"/>
    <property type="match status" value="1"/>
</dbReference>
<dbReference type="Pfam" id="PF07991">
    <property type="entry name" value="KARI_N"/>
    <property type="match status" value="1"/>
</dbReference>
<dbReference type="PIRSF" id="PIRSF000116">
    <property type="entry name" value="IlvC_gammaproteo"/>
    <property type="match status" value="1"/>
</dbReference>
<dbReference type="SUPFAM" id="SSF48179">
    <property type="entry name" value="6-phosphogluconate dehydrogenase C-terminal domain-like"/>
    <property type="match status" value="1"/>
</dbReference>
<dbReference type="SUPFAM" id="SSF51735">
    <property type="entry name" value="NAD(P)-binding Rossmann-fold domains"/>
    <property type="match status" value="1"/>
</dbReference>
<dbReference type="PROSITE" id="PS51851">
    <property type="entry name" value="KARI_C"/>
    <property type="match status" value="1"/>
</dbReference>
<dbReference type="PROSITE" id="PS51850">
    <property type="entry name" value="KARI_N"/>
    <property type="match status" value="1"/>
</dbReference>
<proteinExistence type="inferred from homology"/>
<sequence>MDVHYDADPALIHDKQVAVIGYGSQGHAHALNLHDSGVDVAVGLRPGSSSRPKAEQQGLTVMDIGEAAAWGDVVMLLIPDQHQKDVYEAKIAEHMTPGTALGFGHGFNIHYDRIEPPEAVDVFMVAPKSPGHLVRRTYTDGSGVPCLAAVDQDPSGGAMALAISYADAIGGTHAGVIETTFKDETETDLFGEQAVLCGGSQALIQAGFETLVDAGYPEELAYFECLHELKLIVDLYYEGGLEYMNHSVSDTAEYGGYTRGPRVIDDAVREQMQEILEEVQSGEFADEWIEEYEQGAPQLQEERAALTEHPIEQVGQTLRGMMPWLNGDETSADEDAPDAADTAPASSS</sequence>
<organism>
    <name type="scientific">Salinibacter ruber (strain DSM 13855 / M31)</name>
    <dbReference type="NCBI Taxonomy" id="309807"/>
    <lineage>
        <taxon>Bacteria</taxon>
        <taxon>Pseudomonadati</taxon>
        <taxon>Rhodothermota</taxon>
        <taxon>Rhodothermia</taxon>
        <taxon>Rhodothermales</taxon>
        <taxon>Salinibacteraceae</taxon>
        <taxon>Salinibacter</taxon>
    </lineage>
</organism>
<protein>
    <recommendedName>
        <fullName evidence="1">Ketol-acid reductoisomerase (NADP(+))</fullName>
        <shortName evidence="1">KARI</shortName>
        <ecNumber evidence="1">1.1.1.86</ecNumber>
    </recommendedName>
    <alternativeName>
        <fullName evidence="1">Acetohydroxy-acid isomeroreductase</fullName>
        <shortName evidence="1">AHIR</shortName>
    </alternativeName>
    <alternativeName>
        <fullName evidence="1">Alpha-keto-beta-hydroxylacyl reductoisomerase</fullName>
    </alternativeName>
    <alternativeName>
        <fullName evidence="1">Ketol-acid reductoisomerase type 1</fullName>
    </alternativeName>
    <alternativeName>
        <fullName evidence="1">Ketol-acid reductoisomerase type I</fullName>
    </alternativeName>
</protein>
<reference key="1">
    <citation type="journal article" date="2005" name="Proc. Natl. Acad. Sci. U.S.A.">
        <title>The genome of Salinibacter ruber: convergence and gene exchange among hyperhalophilic bacteria and archaea.</title>
        <authorList>
            <person name="Mongodin E.F."/>
            <person name="Nelson K.E."/>
            <person name="Daugherty S."/>
            <person name="DeBoy R.T."/>
            <person name="Wister J."/>
            <person name="Khouri H."/>
            <person name="Weidman J."/>
            <person name="Walsh D.A."/>
            <person name="Papke R.T."/>
            <person name="Sanchez Perez G."/>
            <person name="Sharma A.K."/>
            <person name="Nesbo C.L."/>
            <person name="MacLeod D."/>
            <person name="Bapteste E."/>
            <person name="Doolittle W.F."/>
            <person name="Charlebois R.L."/>
            <person name="Legault B."/>
            <person name="Rodriguez-Valera F."/>
        </authorList>
    </citation>
    <scope>NUCLEOTIDE SEQUENCE [LARGE SCALE GENOMIC DNA]</scope>
    <source>
        <strain>DSM 13855 / CECT 5946 / M31</strain>
    </source>
</reference>
<accession>Q2S0M9</accession>
<feature type="chain" id="PRO_0000252786" description="Ketol-acid reductoisomerase (NADP(+))">
    <location>
        <begin position="1"/>
        <end position="348"/>
    </location>
</feature>
<feature type="domain" description="KARI N-terminal Rossmann" evidence="2">
    <location>
        <begin position="1"/>
        <end position="179"/>
    </location>
</feature>
<feature type="domain" description="KARI C-terminal knotted" evidence="3">
    <location>
        <begin position="180"/>
        <end position="325"/>
    </location>
</feature>
<feature type="region of interest" description="Disordered" evidence="4">
    <location>
        <begin position="323"/>
        <end position="348"/>
    </location>
</feature>
<feature type="compositionally biased region" description="Low complexity" evidence="4">
    <location>
        <begin position="339"/>
        <end position="348"/>
    </location>
</feature>
<feature type="active site" evidence="1">
    <location>
        <position position="105"/>
    </location>
</feature>
<feature type="binding site" evidence="1">
    <location>
        <begin position="22"/>
        <end position="25"/>
    </location>
    <ligand>
        <name>NADP(+)</name>
        <dbReference type="ChEBI" id="CHEBI:58349"/>
    </ligand>
</feature>
<feature type="binding site" evidence="1">
    <location>
        <position position="45"/>
    </location>
    <ligand>
        <name>NADP(+)</name>
        <dbReference type="ChEBI" id="CHEBI:58349"/>
    </ligand>
</feature>
<feature type="binding site" evidence="1">
    <location>
        <position position="48"/>
    </location>
    <ligand>
        <name>NADP(+)</name>
        <dbReference type="ChEBI" id="CHEBI:58349"/>
    </ligand>
</feature>
<feature type="binding site" evidence="1">
    <location>
        <position position="50"/>
    </location>
    <ligand>
        <name>NADP(+)</name>
        <dbReference type="ChEBI" id="CHEBI:58349"/>
    </ligand>
</feature>
<feature type="binding site" evidence="1">
    <location>
        <begin position="80"/>
        <end position="83"/>
    </location>
    <ligand>
        <name>NADP(+)</name>
        <dbReference type="ChEBI" id="CHEBI:58349"/>
    </ligand>
</feature>
<feature type="binding site" evidence="1">
    <location>
        <position position="131"/>
    </location>
    <ligand>
        <name>NADP(+)</name>
        <dbReference type="ChEBI" id="CHEBI:58349"/>
    </ligand>
</feature>
<feature type="binding site" evidence="1">
    <location>
        <position position="188"/>
    </location>
    <ligand>
        <name>Mg(2+)</name>
        <dbReference type="ChEBI" id="CHEBI:18420"/>
        <label>1</label>
    </ligand>
</feature>
<feature type="binding site" evidence="1">
    <location>
        <position position="188"/>
    </location>
    <ligand>
        <name>Mg(2+)</name>
        <dbReference type="ChEBI" id="CHEBI:18420"/>
        <label>2</label>
    </ligand>
</feature>
<feature type="binding site" evidence="1">
    <location>
        <position position="192"/>
    </location>
    <ligand>
        <name>Mg(2+)</name>
        <dbReference type="ChEBI" id="CHEBI:18420"/>
        <label>1</label>
    </ligand>
</feature>
<feature type="binding site" evidence="1">
    <location>
        <position position="224"/>
    </location>
    <ligand>
        <name>Mg(2+)</name>
        <dbReference type="ChEBI" id="CHEBI:18420"/>
        <label>2</label>
    </ligand>
</feature>
<feature type="binding site" evidence="1">
    <location>
        <position position="228"/>
    </location>
    <ligand>
        <name>Mg(2+)</name>
        <dbReference type="ChEBI" id="CHEBI:18420"/>
        <label>2</label>
    </ligand>
</feature>
<feature type="binding site" evidence="1">
    <location>
        <position position="249"/>
    </location>
    <ligand>
        <name>substrate</name>
    </ligand>
</feature>